<accession>Q27511</accession>
<comment type="function">
    <text evidence="2 5">Variant histone H2A which replaces conventional H2A in a subset of nucleosomes. Nucleosomes wrap and compact DNA into chromatin, limiting DNA accessibility to the cellular machineries which require DNA as a template. Histones thereby play a central role in transcription regulation, DNA repair, DNA replication and chromosomal stability. DNA accessibility is regulated via a complex set of post-translational modifications of histones, also called histone code, and nucleosome remodeling (By similarity). Required to maintain non-distal tip cell (DTC) fate of somatic gonadal cells through the repression of transcription factor ceh-22 (PubMed:24346701).</text>
</comment>
<comment type="subunit">
    <text evidence="1">The nucleosome is a histone octamer containing two molecules each of H2A, H2B, H3 and H4 assembled in one H3-H4 heterotetramer and two H2A-H2B heterodimers. The octamer wraps approximately 147 bp of DNA. H2A or its variant H2AV forms a heterodimer with H2B (By similarity).</text>
</comment>
<comment type="subcellular location">
    <subcellularLocation>
        <location evidence="5">Nucleus</location>
    </subcellularLocation>
    <subcellularLocation>
        <location evidence="2">Chromosome</location>
    </subcellularLocation>
    <text evidence="5">Localizes in punctate structures in the nucleus.</text>
</comment>
<comment type="tissue specificity">
    <text evidence="5">Expressed in somatic gonadal cells.</text>
</comment>
<comment type="PTM">
    <text evidence="1">Monoubiquitination of Lys-124 gives a specific tag for epigenetic transcriptional repression.</text>
</comment>
<comment type="PTM">
    <text evidence="1">May be acetylated.</text>
</comment>
<comment type="disruption phenotype">
    <text evidence="4">RNAi-mediated knockdown results in sterility.</text>
</comment>
<comment type="similarity">
    <text evidence="6">Belongs to the histone H2A family.</text>
</comment>
<protein>
    <recommendedName>
        <fullName>Histone H2A.V</fullName>
    </recommendedName>
    <alternativeName>
        <fullName>H2A.F/Z</fullName>
    </alternativeName>
</protein>
<name>H2AV_CAEEL</name>
<reference key="1">
    <citation type="journal article" date="1998" name="Science">
        <title>Genome sequence of the nematode C. elegans: a platform for investigating biology.</title>
        <authorList>
            <consortium name="The C. elegans sequencing consortium"/>
        </authorList>
    </citation>
    <scope>NUCLEOTIDE SEQUENCE [LARGE SCALE GENOMIC DNA]</scope>
    <source>
        <strain>Bristol N2</strain>
    </source>
</reference>
<reference key="2">
    <citation type="journal article" date="2006" name="PLoS Genet.">
        <title>Diverse chromatin remodeling genes antagonize the Rb-involved SynMuv pathways in C. elegans.</title>
        <authorList>
            <person name="Cui M."/>
            <person name="Kim E.B."/>
            <person name="Han M."/>
        </authorList>
    </citation>
    <scope>DISRUPTION PHENOTYPE</scope>
</reference>
<reference key="3">
    <citation type="journal article" date="2014" name="Development">
        <title>HTZ-1/H2A.z and MYS-1/MYST HAT act redundantly to maintain cell fates in somatic gonadal cells through repression of ceh-22 in C. elegans.</title>
        <authorList>
            <person name="Shibata Y."/>
            <person name="Sawa H."/>
            <person name="Nishiwaki K."/>
        </authorList>
    </citation>
    <scope>FUNCTION</scope>
    <scope>SUBCELLULAR LOCATION</scope>
    <scope>TISSUE SPECIFICITY</scope>
</reference>
<sequence>MAGGKGKAGKDSGKSKSKVVSRSARAGLQFPVGRIHRFLKQRTTSSGRVGATAAVYSAAILEYLTAEVLELAGNASKDLKVKRITPRHLHLAIRGDEELDTLIKATIAGGGVIPHIHRYLMNKKGAPVPGKPGAPGQGPQ</sequence>
<organism>
    <name type="scientific">Caenorhabditis elegans</name>
    <dbReference type="NCBI Taxonomy" id="6239"/>
    <lineage>
        <taxon>Eukaryota</taxon>
        <taxon>Metazoa</taxon>
        <taxon>Ecdysozoa</taxon>
        <taxon>Nematoda</taxon>
        <taxon>Chromadorea</taxon>
        <taxon>Rhabditida</taxon>
        <taxon>Rhabditina</taxon>
        <taxon>Rhabditomorpha</taxon>
        <taxon>Rhabditoidea</taxon>
        <taxon>Rhabditidae</taxon>
        <taxon>Peloderinae</taxon>
        <taxon>Caenorhabditis</taxon>
    </lineage>
</organism>
<feature type="initiator methionine" description="Removed" evidence="1">
    <location>
        <position position="1"/>
    </location>
</feature>
<feature type="chain" id="PRO_0000239071" description="Histone H2A.V">
    <location>
        <begin position="2"/>
        <end position="140"/>
    </location>
</feature>
<feature type="region of interest" description="Disordered" evidence="3">
    <location>
        <begin position="1"/>
        <end position="23"/>
    </location>
</feature>
<feature type="cross-link" description="Glycyl lysine isopeptide (Lys-Gly) (interchain with G-Cter in ubiquitin)" evidence="1">
    <location>
        <position position="124"/>
    </location>
</feature>
<feature type="helix" evidence="8">
    <location>
        <begin position="22"/>
        <end position="25"/>
    </location>
</feature>
<feature type="helix" evidence="8">
    <location>
        <begin position="32"/>
        <end position="42"/>
    </location>
</feature>
<feature type="helix" evidence="8">
    <location>
        <begin position="51"/>
        <end position="78"/>
    </location>
</feature>
<feature type="strand" evidence="8">
    <location>
        <begin position="82"/>
        <end position="84"/>
    </location>
</feature>
<feature type="helix" evidence="8">
    <location>
        <begin position="86"/>
        <end position="94"/>
    </location>
</feature>
<feature type="helix" evidence="8">
    <location>
        <begin position="97"/>
        <end position="105"/>
    </location>
</feature>
<evidence type="ECO:0000250" key="1"/>
<evidence type="ECO:0000250" key="2">
    <source>
        <dbReference type="UniProtKB" id="P27661"/>
    </source>
</evidence>
<evidence type="ECO:0000256" key="3">
    <source>
        <dbReference type="SAM" id="MobiDB-lite"/>
    </source>
</evidence>
<evidence type="ECO:0000269" key="4">
    <source>
    </source>
</evidence>
<evidence type="ECO:0000269" key="5">
    <source>
    </source>
</evidence>
<evidence type="ECO:0000305" key="6"/>
<evidence type="ECO:0000312" key="7">
    <source>
        <dbReference type="WormBase" id="R08C7.3"/>
    </source>
</evidence>
<evidence type="ECO:0007829" key="8">
    <source>
        <dbReference type="PDB" id="6K0C"/>
    </source>
</evidence>
<proteinExistence type="evidence at protein level"/>
<dbReference type="EMBL" id="BX284604">
    <property type="protein sequence ID" value="CCD73086.1"/>
    <property type="molecule type" value="Genomic_DNA"/>
</dbReference>
<dbReference type="PIR" id="T29662">
    <property type="entry name" value="T29662"/>
</dbReference>
<dbReference type="RefSeq" id="NP_500569.1">
    <property type="nucleotide sequence ID" value="NM_068168.9"/>
</dbReference>
<dbReference type="PDB" id="6K0C">
    <property type="method" value="X-ray"/>
    <property type="resolution" value="2.28 A"/>
    <property type="chains" value="D=17-124"/>
</dbReference>
<dbReference type="PDBsum" id="6K0C"/>
<dbReference type="SMR" id="Q27511"/>
<dbReference type="BioGRID" id="42342">
    <property type="interactions" value="12"/>
</dbReference>
<dbReference type="FunCoup" id="Q27511">
    <property type="interactions" value="2474"/>
</dbReference>
<dbReference type="STRING" id="6239.R08C7.3.3"/>
<dbReference type="PaxDb" id="6239-R08C7.3.2"/>
<dbReference type="PeptideAtlas" id="Q27511"/>
<dbReference type="EnsemblMetazoa" id="R08C7.3.1">
    <property type="protein sequence ID" value="R08C7.3.1"/>
    <property type="gene ID" value="WBGene00019947"/>
</dbReference>
<dbReference type="GeneID" id="177212"/>
<dbReference type="KEGG" id="cel:CELE_R08C7.3"/>
<dbReference type="UCSC" id="R08C7.3.1">
    <property type="organism name" value="c. elegans"/>
</dbReference>
<dbReference type="AGR" id="WB:WBGene00019947"/>
<dbReference type="CTD" id="177212"/>
<dbReference type="WormBase" id="R08C7.3">
    <property type="protein sequence ID" value="CE07426"/>
    <property type="gene ID" value="WBGene00019947"/>
    <property type="gene designation" value="htz-1"/>
</dbReference>
<dbReference type="eggNOG" id="KOG1757">
    <property type="taxonomic scope" value="Eukaryota"/>
</dbReference>
<dbReference type="GeneTree" id="ENSGT00940000174660"/>
<dbReference type="HOGENOM" id="CLU_062828_2_2_1"/>
<dbReference type="InParanoid" id="Q27511"/>
<dbReference type="OMA" id="MNKKGAP"/>
<dbReference type="OrthoDB" id="9421954at2759"/>
<dbReference type="PhylomeDB" id="Q27511"/>
<dbReference type="Reactome" id="R-CEL-2299718">
    <property type="pathway name" value="Condensation of Prophase Chromosomes"/>
</dbReference>
<dbReference type="Reactome" id="R-CEL-2559580">
    <property type="pathway name" value="Oxidative Stress Induced Senescence"/>
</dbReference>
<dbReference type="Reactome" id="R-CEL-5250924">
    <property type="pathway name" value="B-WICH complex positively regulates rRNA expression"/>
</dbReference>
<dbReference type="Reactome" id="R-CEL-5578749">
    <property type="pathway name" value="Transcriptional regulation by small RNAs"/>
</dbReference>
<dbReference type="Reactome" id="R-CEL-68616">
    <property type="pathway name" value="Assembly of the ORC complex at the origin of replication"/>
</dbReference>
<dbReference type="Reactome" id="R-CEL-73772">
    <property type="pathway name" value="RNA Polymerase I Promoter Escape"/>
</dbReference>
<dbReference type="Reactome" id="R-CEL-8936459">
    <property type="pathway name" value="RUNX1 regulates genes involved in megakaryocyte differentiation and platelet function"/>
</dbReference>
<dbReference type="Reactome" id="R-CEL-9843940">
    <property type="pathway name" value="Regulation of endogenous retroelements by KRAB-ZFP proteins"/>
</dbReference>
<dbReference type="PRO" id="PR:Q27511"/>
<dbReference type="Proteomes" id="UP000001940">
    <property type="component" value="Chromosome IV"/>
</dbReference>
<dbReference type="Bgee" id="WBGene00019947">
    <property type="expression patterns" value="Expressed in embryo and 4 other cell types or tissues"/>
</dbReference>
<dbReference type="GO" id="GO:0000785">
    <property type="term" value="C:chromatin"/>
    <property type="evidence" value="ECO:0000314"/>
    <property type="project" value="UniProtKB"/>
</dbReference>
<dbReference type="GO" id="GO:0000793">
    <property type="term" value="C:condensed chromosome"/>
    <property type="evidence" value="ECO:0000314"/>
    <property type="project" value="WormBase"/>
</dbReference>
<dbReference type="GO" id="GO:0000786">
    <property type="term" value="C:nucleosome"/>
    <property type="evidence" value="ECO:0000318"/>
    <property type="project" value="GO_Central"/>
</dbReference>
<dbReference type="GO" id="GO:0005634">
    <property type="term" value="C:nucleus"/>
    <property type="evidence" value="ECO:0000314"/>
    <property type="project" value="UniProtKB"/>
</dbReference>
<dbReference type="GO" id="GO:0003677">
    <property type="term" value="F:DNA binding"/>
    <property type="evidence" value="ECO:0007669"/>
    <property type="project" value="UniProtKB-KW"/>
</dbReference>
<dbReference type="GO" id="GO:0046982">
    <property type="term" value="F:protein heterodimerization activity"/>
    <property type="evidence" value="ECO:0007669"/>
    <property type="project" value="InterPro"/>
</dbReference>
<dbReference type="GO" id="GO:0030527">
    <property type="term" value="F:structural constituent of chromatin"/>
    <property type="evidence" value="ECO:0000318"/>
    <property type="project" value="GO_Central"/>
</dbReference>
<dbReference type="GO" id="GO:0031507">
    <property type="term" value="P:heterochromatin formation"/>
    <property type="evidence" value="ECO:0000318"/>
    <property type="project" value="GO_Central"/>
</dbReference>
<dbReference type="GO" id="GO:0009996">
    <property type="term" value="P:negative regulation of cell fate specification"/>
    <property type="evidence" value="ECO:0000316"/>
    <property type="project" value="UniProtKB"/>
</dbReference>
<dbReference type="GO" id="GO:0045892">
    <property type="term" value="P:negative regulation of DNA-templated transcription"/>
    <property type="evidence" value="ECO:0000316"/>
    <property type="project" value="UniProtKB"/>
</dbReference>
<dbReference type="CDD" id="cd00074">
    <property type="entry name" value="HFD_H2A"/>
    <property type="match status" value="1"/>
</dbReference>
<dbReference type="FunFam" id="1.10.20.10:FF:000005">
    <property type="entry name" value="Histone H2A"/>
    <property type="match status" value="1"/>
</dbReference>
<dbReference type="Gene3D" id="1.10.20.10">
    <property type="entry name" value="Histone, subunit A"/>
    <property type="match status" value="1"/>
</dbReference>
<dbReference type="InterPro" id="IPR009072">
    <property type="entry name" value="Histone-fold"/>
</dbReference>
<dbReference type="InterPro" id="IPR002119">
    <property type="entry name" value="Histone_H2A"/>
</dbReference>
<dbReference type="InterPro" id="IPR007125">
    <property type="entry name" value="Histone_H2A/H2B/H3"/>
</dbReference>
<dbReference type="InterPro" id="IPR032454">
    <property type="entry name" value="Histone_H2A_C"/>
</dbReference>
<dbReference type="InterPro" id="IPR032458">
    <property type="entry name" value="Histone_H2A_CS"/>
</dbReference>
<dbReference type="PANTHER" id="PTHR23430">
    <property type="entry name" value="HISTONE H2A"/>
    <property type="match status" value="1"/>
</dbReference>
<dbReference type="Pfam" id="PF00125">
    <property type="entry name" value="Histone"/>
    <property type="match status" value="1"/>
</dbReference>
<dbReference type="Pfam" id="PF16211">
    <property type="entry name" value="Histone_H2A_C"/>
    <property type="match status" value="1"/>
</dbReference>
<dbReference type="PRINTS" id="PR00620">
    <property type="entry name" value="HISTONEH2A"/>
</dbReference>
<dbReference type="SMART" id="SM00414">
    <property type="entry name" value="H2A"/>
    <property type="match status" value="1"/>
</dbReference>
<dbReference type="SUPFAM" id="SSF47113">
    <property type="entry name" value="Histone-fold"/>
    <property type="match status" value="1"/>
</dbReference>
<dbReference type="PROSITE" id="PS00046">
    <property type="entry name" value="HISTONE_H2A"/>
    <property type="match status" value="1"/>
</dbReference>
<keyword id="KW-0002">3D-structure</keyword>
<keyword id="KW-0007">Acetylation</keyword>
<keyword id="KW-0158">Chromosome</keyword>
<keyword id="KW-0238">DNA-binding</keyword>
<keyword id="KW-1017">Isopeptide bond</keyword>
<keyword id="KW-0544">Nucleosome core</keyword>
<keyword id="KW-0539">Nucleus</keyword>
<keyword id="KW-1185">Reference proteome</keyword>
<keyword id="KW-0832">Ubl conjugation</keyword>
<gene>
    <name evidence="7" type="primary">htz-1</name>
    <name evidence="7" type="ORF">R08C7.3</name>
</gene>